<organism>
    <name type="scientific">Entamoeba histolytica</name>
    <dbReference type="NCBI Taxonomy" id="5759"/>
    <lineage>
        <taxon>Eukaryota</taxon>
        <taxon>Amoebozoa</taxon>
        <taxon>Evosea</taxon>
        <taxon>Archamoebae</taxon>
        <taxon>Mastigamoebida</taxon>
        <taxon>Entamoebidae</taxon>
        <taxon>Entamoeba</taxon>
    </lineage>
</organism>
<reference key="1">
    <citation type="journal article" date="1997" name="Biochem. Biophys. Res. Commun.">
        <title>Analysis of expressed sequence tags (ESTs) of the parasitic protozoa Entamoeba histolytica.</title>
        <authorList>
            <person name="Tanaka T."/>
            <person name="Tanaka M."/>
            <person name="Mitsui Y."/>
        </authorList>
    </citation>
    <scope>NUCLEOTIDE SEQUENCE [MRNA]</scope>
    <source>
        <strain>ATCC 30459 / HM-1:IMSS</strain>
    </source>
</reference>
<feature type="chain" id="PRO_0000064445" description="Actobindin homolog">
    <location>
        <begin position="1" status="less than"/>
        <end position="85"/>
    </location>
</feature>
<feature type="domain" description="WH2" evidence="2">
    <location>
        <begin position="35"/>
        <end position="52"/>
    </location>
</feature>
<feature type="non-terminal residue">
    <location>
        <position position="1"/>
    </location>
</feature>
<protein>
    <recommendedName>
        <fullName>Actobindin homolog</fullName>
    </recommendedName>
</protein>
<evidence type="ECO:0000250" key="1"/>
<evidence type="ECO:0000255" key="2">
    <source>
        <dbReference type="PROSITE-ProRule" id="PRU00406"/>
    </source>
</evidence>
<keyword id="KW-0009">Actin-binding</keyword>
<keyword id="KW-0677">Repeat</keyword>
<comment type="function">
    <text evidence="1">Is able to bind two actin monomers at high concentrations of G-actin.</text>
</comment>
<dbReference type="EMBL" id="AB002757">
    <property type="protein sequence ID" value="BAA21997.1"/>
    <property type="molecule type" value="mRNA"/>
</dbReference>
<dbReference type="SMR" id="O15602"/>
<dbReference type="VEuPathDB" id="AmoebaDB:EHI5A_028950"/>
<dbReference type="VEuPathDB" id="AmoebaDB:EHI7A_013050"/>
<dbReference type="VEuPathDB" id="AmoebaDB:EHI8A_010240"/>
<dbReference type="VEuPathDB" id="AmoebaDB:EHI_158570"/>
<dbReference type="VEuPathDB" id="AmoebaDB:KM1_031210"/>
<dbReference type="eggNOG" id="ENOG502SBN0">
    <property type="taxonomic scope" value="Eukaryota"/>
</dbReference>
<dbReference type="GO" id="GO:0003779">
    <property type="term" value="F:actin binding"/>
    <property type="evidence" value="ECO:0007669"/>
    <property type="project" value="UniProtKB-KW"/>
</dbReference>
<dbReference type="InterPro" id="IPR003124">
    <property type="entry name" value="WH2_dom"/>
</dbReference>
<dbReference type="Pfam" id="PF02205">
    <property type="entry name" value="WH2"/>
    <property type="match status" value="2"/>
</dbReference>
<dbReference type="PROSITE" id="PS51082">
    <property type="entry name" value="WH2"/>
    <property type="match status" value="1"/>
</dbReference>
<name>ACTO_ENTHI</name>
<proteinExistence type="evidence at transcript level"/>
<accession>O15602</accession>
<sequence length="85" mass="8990">DAKALAGIADAKLKHTETGDKSAPVIENVEIKKGDRNELLSGIKEGKELKKAETNDRSAPVIPADAKVQEDNRGALLADIQATAK</sequence>